<gene>
    <name evidence="1" type="primary">groEL1</name>
    <name evidence="1" type="synonym">groL1</name>
    <name type="ordered locus">Mkms_1171</name>
</gene>
<comment type="function">
    <text evidence="1">Together with its co-chaperonin GroES, plays an essential role in assisting protein folding. The GroEL-GroES system forms a nano-cage that allows encapsulation of the non-native substrate proteins and provides a physical environment optimized to promote and accelerate protein folding.</text>
</comment>
<comment type="catalytic activity">
    <reaction evidence="1">
        <text>ATP + H2O + a folded polypeptide = ADP + phosphate + an unfolded polypeptide.</text>
        <dbReference type="EC" id="5.6.1.7"/>
    </reaction>
</comment>
<comment type="subunit">
    <text evidence="1">Forms a cylinder of 14 subunits composed of two heptameric rings stacked back-to-back. Interacts with the co-chaperonin GroES.</text>
</comment>
<comment type="subcellular location">
    <subcellularLocation>
        <location evidence="1">Cytoplasm</location>
    </subcellularLocation>
</comment>
<comment type="similarity">
    <text evidence="1">Belongs to the chaperonin (HSP60) family.</text>
</comment>
<dbReference type="EC" id="5.6.1.7" evidence="1"/>
<dbReference type="EMBL" id="CP000518">
    <property type="protein sequence ID" value="ABL90384.1"/>
    <property type="molecule type" value="Genomic_DNA"/>
</dbReference>
<dbReference type="SMR" id="A1UC26"/>
<dbReference type="STRING" id="189918.Mkms_1171"/>
<dbReference type="KEGG" id="mkm:Mkms_1171"/>
<dbReference type="HOGENOM" id="CLU_016503_3_0_11"/>
<dbReference type="OrthoDB" id="9766614at2"/>
<dbReference type="GO" id="GO:0005737">
    <property type="term" value="C:cytoplasm"/>
    <property type="evidence" value="ECO:0007669"/>
    <property type="project" value="UniProtKB-SubCell"/>
</dbReference>
<dbReference type="GO" id="GO:0005524">
    <property type="term" value="F:ATP binding"/>
    <property type="evidence" value="ECO:0007669"/>
    <property type="project" value="UniProtKB-UniRule"/>
</dbReference>
<dbReference type="GO" id="GO:0140662">
    <property type="term" value="F:ATP-dependent protein folding chaperone"/>
    <property type="evidence" value="ECO:0007669"/>
    <property type="project" value="InterPro"/>
</dbReference>
<dbReference type="GO" id="GO:0016853">
    <property type="term" value="F:isomerase activity"/>
    <property type="evidence" value="ECO:0007669"/>
    <property type="project" value="UniProtKB-KW"/>
</dbReference>
<dbReference type="GO" id="GO:0051082">
    <property type="term" value="F:unfolded protein binding"/>
    <property type="evidence" value="ECO:0007669"/>
    <property type="project" value="UniProtKB-UniRule"/>
</dbReference>
<dbReference type="GO" id="GO:0042026">
    <property type="term" value="P:protein refolding"/>
    <property type="evidence" value="ECO:0007669"/>
    <property type="project" value="UniProtKB-UniRule"/>
</dbReference>
<dbReference type="CDD" id="cd03344">
    <property type="entry name" value="GroEL"/>
    <property type="match status" value="1"/>
</dbReference>
<dbReference type="FunFam" id="3.50.7.10:FF:000001">
    <property type="entry name" value="60 kDa chaperonin"/>
    <property type="match status" value="1"/>
</dbReference>
<dbReference type="Gene3D" id="3.50.7.10">
    <property type="entry name" value="GroEL"/>
    <property type="match status" value="1"/>
</dbReference>
<dbReference type="Gene3D" id="1.10.560.10">
    <property type="entry name" value="GroEL-like equatorial domain"/>
    <property type="match status" value="1"/>
</dbReference>
<dbReference type="Gene3D" id="3.30.260.10">
    <property type="entry name" value="TCP-1-like chaperonin intermediate domain"/>
    <property type="match status" value="1"/>
</dbReference>
<dbReference type="HAMAP" id="MF_00600">
    <property type="entry name" value="CH60"/>
    <property type="match status" value="1"/>
</dbReference>
<dbReference type="InterPro" id="IPR018370">
    <property type="entry name" value="Chaperonin_Cpn60_CS"/>
</dbReference>
<dbReference type="InterPro" id="IPR001844">
    <property type="entry name" value="Cpn60/GroEL"/>
</dbReference>
<dbReference type="InterPro" id="IPR002423">
    <property type="entry name" value="Cpn60/GroEL/TCP-1"/>
</dbReference>
<dbReference type="InterPro" id="IPR027409">
    <property type="entry name" value="GroEL-like_apical_dom_sf"/>
</dbReference>
<dbReference type="InterPro" id="IPR027413">
    <property type="entry name" value="GROEL-like_equatorial_sf"/>
</dbReference>
<dbReference type="InterPro" id="IPR027410">
    <property type="entry name" value="TCP-1-like_intermed_sf"/>
</dbReference>
<dbReference type="NCBIfam" id="TIGR02348">
    <property type="entry name" value="GroEL"/>
    <property type="match status" value="1"/>
</dbReference>
<dbReference type="NCBIfam" id="NF000592">
    <property type="entry name" value="PRK00013.1"/>
    <property type="match status" value="1"/>
</dbReference>
<dbReference type="NCBIfam" id="NF009487">
    <property type="entry name" value="PRK12849.1"/>
    <property type="match status" value="1"/>
</dbReference>
<dbReference type="NCBIfam" id="NF009488">
    <property type="entry name" value="PRK12850.1"/>
    <property type="match status" value="1"/>
</dbReference>
<dbReference type="NCBIfam" id="NF009489">
    <property type="entry name" value="PRK12851.1"/>
    <property type="match status" value="1"/>
</dbReference>
<dbReference type="PANTHER" id="PTHR45633">
    <property type="entry name" value="60 KDA HEAT SHOCK PROTEIN, MITOCHONDRIAL"/>
    <property type="match status" value="1"/>
</dbReference>
<dbReference type="Pfam" id="PF00118">
    <property type="entry name" value="Cpn60_TCP1"/>
    <property type="match status" value="1"/>
</dbReference>
<dbReference type="PRINTS" id="PR00298">
    <property type="entry name" value="CHAPERONIN60"/>
</dbReference>
<dbReference type="SUPFAM" id="SSF52029">
    <property type="entry name" value="GroEL apical domain-like"/>
    <property type="match status" value="1"/>
</dbReference>
<dbReference type="SUPFAM" id="SSF48592">
    <property type="entry name" value="GroEL equatorial domain-like"/>
    <property type="match status" value="1"/>
</dbReference>
<dbReference type="SUPFAM" id="SSF54849">
    <property type="entry name" value="GroEL-intermediate domain like"/>
    <property type="match status" value="1"/>
</dbReference>
<dbReference type="PROSITE" id="PS00296">
    <property type="entry name" value="CHAPERONINS_CPN60"/>
    <property type="match status" value="1"/>
</dbReference>
<name>CH601_MYCSK</name>
<accession>A1UC26</accession>
<feature type="chain" id="PRO_0000332023" description="Chaperonin GroEL 1">
    <location>
        <begin position="1"/>
        <end position="540"/>
    </location>
</feature>
<feature type="binding site" evidence="1">
    <location>
        <begin position="29"/>
        <end position="32"/>
    </location>
    <ligand>
        <name>ATP</name>
        <dbReference type="ChEBI" id="CHEBI:30616"/>
    </ligand>
</feature>
<feature type="binding site" evidence="1">
    <location>
        <begin position="86"/>
        <end position="90"/>
    </location>
    <ligand>
        <name>ATP</name>
        <dbReference type="ChEBI" id="CHEBI:30616"/>
    </ligand>
</feature>
<feature type="binding site" evidence="1">
    <location>
        <position position="413"/>
    </location>
    <ligand>
        <name>ATP</name>
        <dbReference type="ChEBI" id="CHEBI:30616"/>
    </ligand>
</feature>
<feature type="binding site" evidence="1">
    <location>
        <begin position="478"/>
        <end position="480"/>
    </location>
    <ligand>
        <name>ATP</name>
        <dbReference type="ChEBI" id="CHEBI:30616"/>
    </ligand>
</feature>
<feature type="binding site" evidence="1">
    <location>
        <position position="494"/>
    </location>
    <ligand>
        <name>ATP</name>
        <dbReference type="ChEBI" id="CHEBI:30616"/>
    </ligand>
</feature>
<reference key="1">
    <citation type="submission" date="2006-12" db="EMBL/GenBank/DDBJ databases">
        <title>Complete sequence of chromosome of Mycobacterium sp. KMS.</title>
        <authorList>
            <consortium name="US DOE Joint Genome Institute"/>
            <person name="Copeland A."/>
            <person name="Lucas S."/>
            <person name="Lapidus A."/>
            <person name="Barry K."/>
            <person name="Detter J.C."/>
            <person name="Glavina del Rio T."/>
            <person name="Hammon N."/>
            <person name="Israni S."/>
            <person name="Dalin E."/>
            <person name="Tice H."/>
            <person name="Pitluck S."/>
            <person name="Kiss H."/>
            <person name="Brettin T."/>
            <person name="Bruce D."/>
            <person name="Han C."/>
            <person name="Tapia R."/>
            <person name="Gilna P."/>
            <person name="Schmutz J."/>
            <person name="Larimer F."/>
            <person name="Land M."/>
            <person name="Hauser L."/>
            <person name="Kyrpides N."/>
            <person name="Mikhailova N."/>
            <person name="Miller C.D."/>
            <person name="Richardson P."/>
        </authorList>
    </citation>
    <scope>NUCLEOTIDE SEQUENCE [LARGE SCALE GENOMIC DNA]</scope>
    <source>
        <strain>KMS</strain>
    </source>
</reference>
<organism>
    <name type="scientific">Mycobacterium sp. (strain KMS)</name>
    <dbReference type="NCBI Taxonomy" id="189918"/>
    <lineage>
        <taxon>Bacteria</taxon>
        <taxon>Bacillati</taxon>
        <taxon>Actinomycetota</taxon>
        <taxon>Actinomycetes</taxon>
        <taxon>Mycobacteriales</taxon>
        <taxon>Mycobacteriaceae</taxon>
        <taxon>Mycobacterium</taxon>
    </lineage>
</organism>
<sequence length="540" mass="56003">MSKQIEFNETARRAMEIGVDKLADAVKVTLGPRGRNVVLAKSWGGPTVTNDGVTIAREIDLEDPFENLGAQLVKSVATKTNDVAGDGTTTATVLAQALVRAGLRNVAAGANPIALGAGISKAADAVSEALLAAATPVDDKSGIAQVATVSSRDEQIGELVGEAMTKVGHDGVVTVEESSTLNTELEVTEGVGFDKGFISAYFVTDFDSQEAVLEDALVLLHREKVSSLPDLLPLLEKVAEAGKPLLIIAEDVEGEALSTLVVNAIRKTLKAVAVKAPFFGDRRKAFLDDLAVVTGGQVINPDVGLVLREVGLDVLGTARRVVVTKDSTVIVDGGGSADAIADRAKQLRAEIEATDSDWDREKLEERLAKLAGGVAVIKVGAATETDLKKRKEAVEDAVSAAKAAVEEGIVTGGGAALVQARKALDSLRGSVSGDEALGVEVFNSALSAPLYWIATNAGLDGSVVVNKVSELPAGQGFNAATLEFGDLLADGVVDPVKVTRSAVLNAASVARMVLTTETAIVDKPAEEEDHGHGHHHGHAH</sequence>
<evidence type="ECO:0000255" key="1">
    <source>
        <dbReference type="HAMAP-Rule" id="MF_00600"/>
    </source>
</evidence>
<keyword id="KW-0067">ATP-binding</keyword>
<keyword id="KW-0143">Chaperone</keyword>
<keyword id="KW-0963">Cytoplasm</keyword>
<keyword id="KW-0413">Isomerase</keyword>
<keyword id="KW-0547">Nucleotide-binding</keyword>
<protein>
    <recommendedName>
        <fullName evidence="1">Chaperonin GroEL 1</fullName>
        <ecNumber evidence="1">5.6.1.7</ecNumber>
    </recommendedName>
    <alternativeName>
        <fullName evidence="1">60 kDa chaperonin 1</fullName>
    </alternativeName>
    <alternativeName>
        <fullName evidence="1">Chaperonin-60 1</fullName>
        <shortName evidence="1">Cpn60 1</shortName>
    </alternativeName>
</protein>
<proteinExistence type="inferred from homology"/>